<reference key="1">
    <citation type="journal article" date="1997" name="Hum. Mol. Genet.">
        <title>Mouse pale ear (ep) is homologous to human Hermansky-Pudlak syndrome and contains a rare 'AT-AC' intron.</title>
        <authorList>
            <person name="Feng G.H."/>
            <person name="Bailin T."/>
            <person name="Oh J."/>
            <person name="Spritz R.A."/>
        </authorList>
    </citation>
    <scope>NUCLEOTIDE SEQUENCE [GENOMIC DNA / MRNA]</scope>
    <source>
        <strain>129/SvJ</strain>
        <strain>BALB/cJ</strain>
    </source>
</reference>
<reference key="2">
    <citation type="journal article" date="1997" name="Proc. Natl. Acad. Sci. U.S.A.">
        <title>The mouse pale ear (ep) mutation is the homologue of human Hermansky-Pudlak syndrome.</title>
        <authorList>
            <person name="Gardner J.M."/>
            <person name="Wildenberg S.C."/>
            <person name="Keiper N.M."/>
            <person name="Novak E.K."/>
            <person name="Rusiniak M.E."/>
            <person name="Swank R.T."/>
            <person name="Puri N."/>
            <person name="Finger J.N."/>
            <person name="Hagiwara N."/>
            <person name="Lehman A.L."/>
            <person name="Gales T.L."/>
            <person name="Bayer M.E."/>
            <person name="King R.A."/>
            <person name="Brilliant M.H."/>
        </authorList>
    </citation>
    <scope>NUCLEOTIDE SEQUENCE [GENOMIC DNA / MRNA]</scope>
    <scope>DISEASE</scope>
    <source>
        <strain>C57BL/6J</strain>
        <tissue>Embryo</tissue>
    </source>
</reference>
<comment type="function">
    <text evidence="1">Component of the BLOC-3 complex, a complex that acts as a guanine exchange factor (GEF) for RAB32 and RAB38, promotes the exchange of GDP to GTP, converting them from an inactive GDP-bound form into an active GTP-bound form. The BLOC-3 complex plays an important role in the control of melanin production and melanosome biogenesis and promotes the membrane localization of RAB32 and RAB38.</text>
</comment>
<comment type="subunit">
    <text evidence="1">Component of the biogenesis of lysosome-related organelles complex-3 (or BLOC-3), a heterodimer of HPS1 and HPS4. HPS1 cannot but BLOC-3 complex (heterodimer of HPS1 and HPS4) can interact with the GTP-bound form of RAB9A and RAB9B. HPS1 and BLOC-3 complex do not interact with the GDP-bound form of RAB9A and RAB9B.</text>
</comment>
<comment type="tissue specificity">
    <text>Expressed in all tissues examined with the possible exception of skeletal muscle. The highest expression was observed in lung, liver, kidney and spleen.</text>
</comment>
<comment type="disease">
    <text evidence="3">Defects in Hps1 are the cause of the pale ear (ep) mutant which exhibits hypopigmentation associated with defects of multiple cytoplasmic organelles, including melanosomes, lysosomes, and granular elements of platelets (PubMed:9256466).</text>
</comment>
<comment type="sequence caution" evidence="4">
    <conflict type="erroneous initiation">
        <sequence resource="EMBL-CDS" id="AAB61333"/>
    </conflict>
</comment>
<gene>
    <name type="primary">Hps1</name>
    <name type="synonym">Ep</name>
    <name type="synonym">Hps</name>
</gene>
<keyword id="KW-0015">Albinism</keyword>
<keyword id="KW-0344">Guanine-nucleotide releasing factor</keyword>
<keyword id="KW-1185">Reference proteome</keyword>
<keyword id="KW-0677">Repeat</keyword>
<dbReference type="EMBL" id="U78315">
    <property type="protein sequence ID" value="AAB60929.1"/>
    <property type="molecule type" value="mRNA"/>
</dbReference>
<dbReference type="EMBL" id="U78966">
    <property type="protein sequence ID" value="AAB61333.1"/>
    <property type="status" value="ALT_INIT"/>
    <property type="molecule type" value="Genomic_DNA"/>
</dbReference>
<dbReference type="EMBL" id="U78955">
    <property type="protein sequence ID" value="AAB61333.1"/>
    <property type="status" value="JOINED"/>
    <property type="molecule type" value="Genomic_DNA"/>
</dbReference>
<dbReference type="EMBL" id="U78956">
    <property type="protein sequence ID" value="AAB61333.1"/>
    <property type="status" value="JOINED"/>
    <property type="molecule type" value="Genomic_DNA"/>
</dbReference>
<dbReference type="EMBL" id="U78957">
    <property type="protein sequence ID" value="AAB61333.1"/>
    <property type="status" value="JOINED"/>
    <property type="molecule type" value="Genomic_DNA"/>
</dbReference>
<dbReference type="EMBL" id="U78958">
    <property type="protein sequence ID" value="AAB61333.1"/>
    <property type="status" value="JOINED"/>
    <property type="molecule type" value="Genomic_DNA"/>
</dbReference>
<dbReference type="EMBL" id="U78959">
    <property type="protein sequence ID" value="AAB61333.1"/>
    <property type="status" value="JOINED"/>
    <property type="molecule type" value="Genomic_DNA"/>
</dbReference>
<dbReference type="EMBL" id="U78960">
    <property type="protein sequence ID" value="AAB61333.1"/>
    <property type="status" value="JOINED"/>
    <property type="molecule type" value="Genomic_DNA"/>
</dbReference>
<dbReference type="EMBL" id="U78961">
    <property type="protein sequence ID" value="AAB61333.1"/>
    <property type="status" value="JOINED"/>
    <property type="molecule type" value="Genomic_DNA"/>
</dbReference>
<dbReference type="EMBL" id="U78962">
    <property type="protein sequence ID" value="AAB61333.1"/>
    <property type="status" value="JOINED"/>
    <property type="molecule type" value="Genomic_DNA"/>
</dbReference>
<dbReference type="EMBL" id="U78963">
    <property type="protein sequence ID" value="AAB61333.1"/>
    <property type="status" value="JOINED"/>
    <property type="molecule type" value="Genomic_DNA"/>
</dbReference>
<dbReference type="EMBL" id="U78964">
    <property type="protein sequence ID" value="AAB61333.1"/>
    <property type="status" value="JOINED"/>
    <property type="molecule type" value="Genomic_DNA"/>
</dbReference>
<dbReference type="EMBL" id="U78965">
    <property type="protein sequence ID" value="AAB61333.1"/>
    <property type="status" value="JOINED"/>
    <property type="molecule type" value="Genomic_DNA"/>
</dbReference>
<dbReference type="EMBL" id="U97149">
    <property type="protein sequence ID" value="AAB68792.1"/>
    <property type="molecule type" value="mRNA"/>
</dbReference>
<dbReference type="EMBL" id="AF003866">
    <property type="protein sequence ID" value="AAB68817.1"/>
    <property type="molecule type" value="mRNA"/>
</dbReference>
<dbReference type="EMBL" id="AF004352">
    <property type="protein sequence ID" value="AAB69159.1"/>
    <property type="molecule type" value="Genomic_DNA"/>
</dbReference>
<dbReference type="EMBL" id="AF004353">
    <property type="protein sequence ID" value="AAB69160.1"/>
    <property type="molecule type" value="Genomic_DNA"/>
</dbReference>
<dbReference type="CCDS" id="CCDS37992.1"/>
<dbReference type="RefSeq" id="NP_062297.1">
    <property type="nucleotide sequence ID" value="NM_019424.2"/>
</dbReference>
<dbReference type="BioGRID" id="228684">
    <property type="interactions" value="1"/>
</dbReference>
<dbReference type="ComplexPortal" id="CPX-5083">
    <property type="entry name" value="BLOC-3 complex"/>
</dbReference>
<dbReference type="FunCoup" id="O08983">
    <property type="interactions" value="682"/>
</dbReference>
<dbReference type="STRING" id="10090.ENSMUSP00000125662"/>
<dbReference type="iPTMnet" id="O08983"/>
<dbReference type="PhosphoSitePlus" id="O08983"/>
<dbReference type="PaxDb" id="10090-ENSMUSP00000125662"/>
<dbReference type="ProteomicsDB" id="273317"/>
<dbReference type="Pumba" id="O08983"/>
<dbReference type="DNASU" id="192236"/>
<dbReference type="GeneID" id="192236"/>
<dbReference type="KEGG" id="mmu:192236"/>
<dbReference type="UCSC" id="uc008hny.1">
    <property type="organism name" value="mouse"/>
</dbReference>
<dbReference type="AGR" id="MGI:2177763"/>
<dbReference type="CTD" id="3257"/>
<dbReference type="MGI" id="MGI:2177763">
    <property type="gene designation" value="Hps1"/>
</dbReference>
<dbReference type="eggNOG" id="ENOG502QW8U">
    <property type="taxonomic scope" value="Eukaryota"/>
</dbReference>
<dbReference type="InParanoid" id="O08983"/>
<dbReference type="OrthoDB" id="10255234at2759"/>
<dbReference type="Reactome" id="R-MMU-8876198">
    <property type="pathway name" value="RAB GEFs exchange GTP for GDP on RABs"/>
</dbReference>
<dbReference type="BioGRID-ORCS" id="192236">
    <property type="hits" value="3 hits in 78 CRISPR screens"/>
</dbReference>
<dbReference type="ChiTaRS" id="Hps1">
    <property type="organism name" value="mouse"/>
</dbReference>
<dbReference type="PRO" id="PR:O08983"/>
<dbReference type="Proteomes" id="UP000000589">
    <property type="component" value="Unplaced"/>
</dbReference>
<dbReference type="RNAct" id="O08983">
    <property type="molecule type" value="protein"/>
</dbReference>
<dbReference type="GO" id="GO:0031085">
    <property type="term" value="C:BLOC-3 complex"/>
    <property type="evidence" value="ECO:0000250"/>
    <property type="project" value="UniProtKB"/>
</dbReference>
<dbReference type="GO" id="GO:0005737">
    <property type="term" value="C:cytoplasm"/>
    <property type="evidence" value="ECO:0000266"/>
    <property type="project" value="ComplexPortal"/>
</dbReference>
<dbReference type="GO" id="GO:0031410">
    <property type="term" value="C:cytoplasmic vesicle"/>
    <property type="evidence" value="ECO:0000266"/>
    <property type="project" value="MGI"/>
</dbReference>
<dbReference type="GO" id="GO:0005085">
    <property type="term" value="F:guanyl-nucleotide exchange factor activity"/>
    <property type="evidence" value="ECO:0007669"/>
    <property type="project" value="UniProtKB-KW"/>
</dbReference>
<dbReference type="GO" id="GO:0007596">
    <property type="term" value="P:blood coagulation"/>
    <property type="evidence" value="ECO:0000315"/>
    <property type="project" value="MGI"/>
</dbReference>
<dbReference type="GO" id="GO:0000902">
    <property type="term" value="P:cell morphogenesis"/>
    <property type="evidence" value="ECO:0000316"/>
    <property type="project" value="MGI"/>
</dbReference>
<dbReference type="GO" id="GO:0048069">
    <property type="term" value="P:eye pigmentation"/>
    <property type="evidence" value="ECO:0000315"/>
    <property type="project" value="MGI"/>
</dbReference>
<dbReference type="GO" id="GO:0010467">
    <property type="term" value="P:gene expression"/>
    <property type="evidence" value="ECO:0000315"/>
    <property type="project" value="MGI"/>
</dbReference>
<dbReference type="GO" id="GO:0006954">
    <property type="term" value="P:inflammatory response"/>
    <property type="evidence" value="ECO:0000316"/>
    <property type="project" value="MGI"/>
</dbReference>
<dbReference type="GO" id="GO:0046907">
    <property type="term" value="P:intracellular transport"/>
    <property type="evidence" value="ECO:0000303"/>
    <property type="project" value="ComplexPortal"/>
</dbReference>
<dbReference type="GO" id="GO:0006882">
    <property type="term" value="P:intracellular zinc ion homeostasis"/>
    <property type="evidence" value="ECO:0000315"/>
    <property type="project" value="MGI"/>
</dbReference>
<dbReference type="GO" id="GO:0055088">
    <property type="term" value="P:lipid homeostasis"/>
    <property type="evidence" value="ECO:0000315"/>
    <property type="project" value="MGI"/>
</dbReference>
<dbReference type="GO" id="GO:0006629">
    <property type="term" value="P:lipid metabolic process"/>
    <property type="evidence" value="ECO:0000315"/>
    <property type="project" value="MGI"/>
</dbReference>
<dbReference type="GO" id="GO:0030324">
    <property type="term" value="P:lung development"/>
    <property type="evidence" value="ECO:0000316"/>
    <property type="project" value="MGI"/>
</dbReference>
<dbReference type="GO" id="GO:0060425">
    <property type="term" value="P:lung morphogenesis"/>
    <property type="evidence" value="ECO:0000316"/>
    <property type="project" value="MGI"/>
</dbReference>
<dbReference type="GO" id="GO:0007040">
    <property type="term" value="P:lysosome organization"/>
    <property type="evidence" value="ECO:0000315"/>
    <property type="project" value="MGI"/>
</dbReference>
<dbReference type="GO" id="GO:0030318">
    <property type="term" value="P:melanocyte differentiation"/>
    <property type="evidence" value="ECO:0000315"/>
    <property type="project" value="MGI"/>
</dbReference>
<dbReference type="GO" id="GO:1903232">
    <property type="term" value="P:melanosome assembly"/>
    <property type="evidence" value="ECO:0000250"/>
    <property type="project" value="UniProtKB"/>
</dbReference>
<dbReference type="GO" id="GO:0043473">
    <property type="term" value="P:pigmentation"/>
    <property type="evidence" value="ECO:0000315"/>
    <property type="project" value="MGI"/>
</dbReference>
<dbReference type="GO" id="GO:0060155">
    <property type="term" value="P:platelet dense granule organization"/>
    <property type="evidence" value="ECO:0000303"/>
    <property type="project" value="ComplexPortal"/>
</dbReference>
<dbReference type="GO" id="GO:0032816">
    <property type="term" value="P:positive regulation of natural killer cell activation"/>
    <property type="evidence" value="ECO:0000315"/>
    <property type="project" value="MGI"/>
</dbReference>
<dbReference type="GO" id="GO:0009306">
    <property type="term" value="P:protein secretion"/>
    <property type="evidence" value="ECO:0000315"/>
    <property type="project" value="MGI"/>
</dbReference>
<dbReference type="GO" id="GO:0003016">
    <property type="term" value="P:respiratory system process"/>
    <property type="evidence" value="ECO:0000316"/>
    <property type="project" value="MGI"/>
</dbReference>
<dbReference type="GO" id="GO:0060041">
    <property type="term" value="P:retina development in camera-type eye"/>
    <property type="evidence" value="ECO:0000315"/>
    <property type="project" value="MGI"/>
</dbReference>
<dbReference type="GO" id="GO:0033299">
    <property type="term" value="P:secretion of lysosomal enzymes"/>
    <property type="evidence" value="ECO:0000315"/>
    <property type="project" value="MGI"/>
</dbReference>
<dbReference type="GO" id="GO:0007338">
    <property type="term" value="P:single fertilization"/>
    <property type="evidence" value="ECO:0000315"/>
    <property type="project" value="MGI"/>
</dbReference>
<dbReference type="GO" id="GO:0007283">
    <property type="term" value="P:spermatogenesis"/>
    <property type="evidence" value="ECO:0000315"/>
    <property type="project" value="MGI"/>
</dbReference>
<dbReference type="GO" id="GO:0016192">
    <property type="term" value="P:vesicle-mediated transport"/>
    <property type="evidence" value="ECO:0007669"/>
    <property type="project" value="InterPro"/>
</dbReference>
<dbReference type="InterPro" id="IPR043972">
    <property type="entry name" value="FUZ/MON1/HPS1_longin_1"/>
</dbReference>
<dbReference type="InterPro" id="IPR043971">
    <property type="entry name" value="FUZ/MON1/HPS1_longin_2"/>
</dbReference>
<dbReference type="InterPro" id="IPR043970">
    <property type="entry name" value="FUZ/MON1/HPS1_longin_3"/>
</dbReference>
<dbReference type="InterPro" id="IPR026053">
    <property type="entry name" value="HPS1"/>
</dbReference>
<dbReference type="PANTHER" id="PTHR12761:SF1">
    <property type="entry name" value="BLOC-3 COMPLEX MEMBER HPS1"/>
    <property type="match status" value="1"/>
</dbReference>
<dbReference type="PANTHER" id="PTHR12761">
    <property type="entry name" value="HERMANSKY-PUDLAK SYNDROME PROTEIN 1"/>
    <property type="match status" value="1"/>
</dbReference>
<dbReference type="Pfam" id="PF19036">
    <property type="entry name" value="Fuz_longin_1"/>
    <property type="match status" value="1"/>
</dbReference>
<dbReference type="Pfam" id="PF19037">
    <property type="entry name" value="Fuz_longin_2"/>
    <property type="match status" value="1"/>
</dbReference>
<dbReference type="Pfam" id="PF19038">
    <property type="entry name" value="Fuz_longin_3"/>
    <property type="match status" value="1"/>
</dbReference>
<name>HPS1_MOUSE</name>
<proteinExistence type="evidence at transcript level"/>
<sequence>MKCVLVATEGAEVLFYWTDEEFAESLRLKLQQSEDEEEELPVLEDQLSTLLAPVIISSMTMLEKLSDTYTCFSTENDNHLYVLHLFGEYLFVAINGDHSESEGDLRRKLCVLKYLFEVHFGLVTVDGQLIRKELRPPDLEERARVWKHFQRLLGTYSYLRDREQSFAVEAVERLIHPQLCEQSIETLERHVVQAINASPERGGEEVLHAFLLVHCKLLAFYSGHGASTLRPADLLALILLVQDLQPSPGTTEEEEEEEDSDSPQRRPKSSQNIPVQQARSQSTSVPTRSSRETDTDSISLPEEYFTPAPSPGDQSSGSLVWLDGGTPPSDALQMAEDTPEGLASHSPELPSPRRIFLDANIKENYCPLVPHTMYCLPLWPGINMVLLTKSPSTPLALILYQLLDGFSLLEKKLKEGQEAGSALRSQPFVADLRQKMDKFIKNRVGQEIQNTWLEFKSKAFSRSEPGSSWELLQVCGKLKRQLCVIYRLSFLVTAPSRGGPHLPQHLQDRAQKLMKERLLDWKDFLLVKSRRNVTMVSYLEDFPGLVHFIYVDRTTGQMVAPSLSPNEKMSSELGKGPLAAFVKAKVWALVRLARRYLQKGCTTLLFQEGDFRCSYFLWFENDMGYKLQMIEVPVLSDDSVPIGVLGGDYYRKLLRYYSKSHPSEPVRCYELLTLHLSVIPTDLLVQQASQLARRLGEASRVTLP</sequence>
<accession>O08983</accession>
<accession>O35155</accession>
<accession>O35725</accession>
<accession>O35950</accession>
<protein>
    <recommendedName>
        <fullName evidence="4">BLOC-3 complex member HPS1</fullName>
    </recommendedName>
    <alternativeName>
        <fullName>Hermansky-Pudlak syndrome 1 protein homolog</fullName>
    </alternativeName>
</protein>
<organism>
    <name type="scientific">Mus musculus</name>
    <name type="common">Mouse</name>
    <dbReference type="NCBI Taxonomy" id="10090"/>
    <lineage>
        <taxon>Eukaryota</taxon>
        <taxon>Metazoa</taxon>
        <taxon>Chordata</taxon>
        <taxon>Craniata</taxon>
        <taxon>Vertebrata</taxon>
        <taxon>Euteleostomi</taxon>
        <taxon>Mammalia</taxon>
        <taxon>Eutheria</taxon>
        <taxon>Euarchontoglires</taxon>
        <taxon>Glires</taxon>
        <taxon>Rodentia</taxon>
        <taxon>Myomorpha</taxon>
        <taxon>Muroidea</taxon>
        <taxon>Muridae</taxon>
        <taxon>Murinae</taxon>
        <taxon>Mus</taxon>
        <taxon>Mus</taxon>
    </lineage>
</organism>
<feature type="chain" id="PRO_0000084049" description="BLOC-3 complex member HPS1">
    <location>
        <begin position="1"/>
        <end position="704"/>
    </location>
</feature>
<feature type="repeat" description="[DE]-X(4)-L-L 1">
    <location>
        <begin position="45"/>
        <end position="51"/>
    </location>
</feature>
<feature type="repeat" description="[DE]-X(4)-L-L 2">
    <location>
        <begin position="520"/>
        <end position="526"/>
    </location>
</feature>
<feature type="repeat" description="[DE]-X(4)-L-L 3">
    <location>
        <begin position="648"/>
        <end position="654"/>
    </location>
</feature>
<feature type="region of interest" description="Disordered" evidence="2">
    <location>
        <begin position="246"/>
        <end position="350"/>
    </location>
</feature>
<feature type="compositionally biased region" description="Acidic residues" evidence="2">
    <location>
        <begin position="251"/>
        <end position="261"/>
    </location>
</feature>
<feature type="compositionally biased region" description="Polar residues" evidence="2">
    <location>
        <begin position="269"/>
        <end position="288"/>
    </location>
</feature>
<feature type="sequence variant" description="In strain: BALB/c.">
    <original>Q</original>
    <variation>R</variation>
    <location>
        <position position="31"/>
    </location>
</feature>
<feature type="sequence variant" description="In strain: BALB/c.">
    <original>Y</original>
    <variation>C</variation>
    <location>
        <position position="89"/>
    </location>
</feature>
<feature type="sequence variant" description="In strain: BALB/c.">
    <location>
        <position position="258"/>
    </location>
</feature>
<feature type="sequence variant" description="In strain: BALB/c.">
    <original>E</original>
    <variation>K</variation>
    <location>
        <position position="567"/>
    </location>
</feature>
<feature type="sequence conflict" description="In Ref. 2; AAB68792." evidence="4" ref="2">
    <original>L</original>
    <variation>M</variation>
    <location>
        <position position="62"/>
    </location>
</feature>
<feature type="sequence conflict" description="In Ref. 2; AAB69159." evidence="4" ref="2">
    <original>S</original>
    <variation>G</variation>
    <location>
        <position position="689"/>
    </location>
</feature>
<evidence type="ECO:0000250" key="1">
    <source>
        <dbReference type="UniProtKB" id="Q92902"/>
    </source>
</evidence>
<evidence type="ECO:0000256" key="2">
    <source>
        <dbReference type="SAM" id="MobiDB-lite"/>
    </source>
</evidence>
<evidence type="ECO:0000269" key="3">
    <source>
    </source>
</evidence>
<evidence type="ECO:0000305" key="4"/>